<keyword id="KW-0028">Amino-acid biosynthesis</keyword>
<keyword id="KW-0067">ATP-binding</keyword>
<keyword id="KW-0963">Cytoplasm</keyword>
<keyword id="KW-0328">Glycosyltransferase</keyword>
<keyword id="KW-0368">Histidine biosynthesis</keyword>
<keyword id="KW-0460">Magnesium</keyword>
<keyword id="KW-0479">Metal-binding</keyword>
<keyword id="KW-0547">Nucleotide-binding</keyword>
<keyword id="KW-1185">Reference proteome</keyword>
<keyword id="KW-0808">Transferase</keyword>
<accession>B2TYG1</accession>
<comment type="function">
    <text evidence="1">Catalyzes the condensation of ATP and 5-phosphoribose 1-diphosphate to form N'-(5'-phosphoribosyl)-ATP (PR-ATP). Has a crucial role in the pathway because the rate of histidine biosynthesis seems to be controlled primarily by regulation of HisG enzymatic activity.</text>
</comment>
<comment type="catalytic activity">
    <reaction evidence="1">
        <text>1-(5-phospho-beta-D-ribosyl)-ATP + diphosphate = 5-phospho-alpha-D-ribose 1-diphosphate + ATP</text>
        <dbReference type="Rhea" id="RHEA:18473"/>
        <dbReference type="ChEBI" id="CHEBI:30616"/>
        <dbReference type="ChEBI" id="CHEBI:33019"/>
        <dbReference type="ChEBI" id="CHEBI:58017"/>
        <dbReference type="ChEBI" id="CHEBI:73183"/>
        <dbReference type="EC" id="2.4.2.17"/>
    </reaction>
</comment>
<comment type="cofactor">
    <cofactor evidence="1">
        <name>Mg(2+)</name>
        <dbReference type="ChEBI" id="CHEBI:18420"/>
    </cofactor>
</comment>
<comment type="activity regulation">
    <text evidence="1">Feedback inhibited by histidine.</text>
</comment>
<comment type="pathway">
    <text evidence="1">Amino-acid biosynthesis; L-histidine biosynthesis; L-histidine from 5-phospho-alpha-D-ribose 1-diphosphate: step 1/9.</text>
</comment>
<comment type="subunit">
    <text evidence="1">Equilibrium between an active dimeric form, an inactive hexameric form and higher aggregates. Interconversion between the various forms is largely reversible and is influenced by the natural substrates and inhibitors of the enzyme.</text>
</comment>
<comment type="subcellular location">
    <subcellularLocation>
        <location evidence="1">Cytoplasm</location>
    </subcellularLocation>
</comment>
<comment type="similarity">
    <text evidence="1">Belongs to the ATP phosphoribosyltransferase family. Long subfamily.</text>
</comment>
<name>HIS1_SHIB3</name>
<gene>
    <name evidence="1" type="primary">hisG</name>
    <name type="ordered locus">SbBS512_E1213</name>
</gene>
<organism>
    <name type="scientific">Shigella boydii serotype 18 (strain CDC 3083-94 / BS512)</name>
    <dbReference type="NCBI Taxonomy" id="344609"/>
    <lineage>
        <taxon>Bacteria</taxon>
        <taxon>Pseudomonadati</taxon>
        <taxon>Pseudomonadota</taxon>
        <taxon>Gammaproteobacteria</taxon>
        <taxon>Enterobacterales</taxon>
        <taxon>Enterobacteriaceae</taxon>
        <taxon>Shigella</taxon>
    </lineage>
</organism>
<protein>
    <recommendedName>
        <fullName evidence="1">ATP phosphoribosyltransferase</fullName>
        <shortName evidence="1">ATP-PRT</shortName>
        <shortName evidence="1">ATP-PRTase</shortName>
        <ecNumber evidence="1">2.4.2.17</ecNumber>
    </recommendedName>
</protein>
<proteinExistence type="inferred from homology"/>
<reference key="1">
    <citation type="submission" date="2008-05" db="EMBL/GenBank/DDBJ databases">
        <title>Complete sequence of Shigella boydii serotype 18 strain BS512.</title>
        <authorList>
            <person name="Rasko D.A."/>
            <person name="Rosovitz M."/>
            <person name="Maurelli A.T."/>
            <person name="Myers G."/>
            <person name="Seshadri R."/>
            <person name="Cer R."/>
            <person name="Jiang L."/>
            <person name="Ravel J."/>
            <person name="Sebastian Y."/>
        </authorList>
    </citation>
    <scope>NUCLEOTIDE SEQUENCE [LARGE SCALE GENOMIC DNA]</scope>
    <source>
        <strain>CDC 3083-94 / BS512</strain>
    </source>
</reference>
<dbReference type="EC" id="2.4.2.17" evidence="1"/>
<dbReference type="EMBL" id="CP001063">
    <property type="protein sequence ID" value="ACD10274.1"/>
    <property type="molecule type" value="Genomic_DNA"/>
</dbReference>
<dbReference type="RefSeq" id="WP_000131782.1">
    <property type="nucleotide sequence ID" value="NC_010658.1"/>
</dbReference>
<dbReference type="SMR" id="B2TYG1"/>
<dbReference type="STRING" id="344609.SbBS512_E1213"/>
<dbReference type="GeneID" id="93775154"/>
<dbReference type="KEGG" id="sbc:SbBS512_E1213"/>
<dbReference type="HOGENOM" id="CLU_038115_1_0_6"/>
<dbReference type="UniPathway" id="UPA00031">
    <property type="reaction ID" value="UER00006"/>
</dbReference>
<dbReference type="Proteomes" id="UP000001030">
    <property type="component" value="Chromosome"/>
</dbReference>
<dbReference type="GO" id="GO:0005737">
    <property type="term" value="C:cytoplasm"/>
    <property type="evidence" value="ECO:0007669"/>
    <property type="project" value="UniProtKB-SubCell"/>
</dbReference>
<dbReference type="GO" id="GO:0005524">
    <property type="term" value="F:ATP binding"/>
    <property type="evidence" value="ECO:0007669"/>
    <property type="project" value="UniProtKB-KW"/>
</dbReference>
<dbReference type="GO" id="GO:0003879">
    <property type="term" value="F:ATP phosphoribosyltransferase activity"/>
    <property type="evidence" value="ECO:0007669"/>
    <property type="project" value="UniProtKB-UniRule"/>
</dbReference>
<dbReference type="GO" id="GO:0000287">
    <property type="term" value="F:magnesium ion binding"/>
    <property type="evidence" value="ECO:0007669"/>
    <property type="project" value="UniProtKB-UniRule"/>
</dbReference>
<dbReference type="GO" id="GO:0000105">
    <property type="term" value="P:L-histidine biosynthetic process"/>
    <property type="evidence" value="ECO:0007669"/>
    <property type="project" value="UniProtKB-UniRule"/>
</dbReference>
<dbReference type="CDD" id="cd13592">
    <property type="entry name" value="PBP2_HisGL2"/>
    <property type="match status" value="1"/>
</dbReference>
<dbReference type="FunFam" id="3.30.70.120:FF:000002">
    <property type="entry name" value="ATP phosphoribosyltransferase"/>
    <property type="match status" value="1"/>
</dbReference>
<dbReference type="FunFam" id="3.40.190.10:FF:000008">
    <property type="entry name" value="ATP phosphoribosyltransferase"/>
    <property type="match status" value="1"/>
</dbReference>
<dbReference type="Gene3D" id="3.30.70.120">
    <property type="match status" value="1"/>
</dbReference>
<dbReference type="Gene3D" id="3.40.190.10">
    <property type="entry name" value="Periplasmic binding protein-like II"/>
    <property type="match status" value="2"/>
</dbReference>
<dbReference type="HAMAP" id="MF_00079">
    <property type="entry name" value="HisG_Long"/>
    <property type="match status" value="1"/>
</dbReference>
<dbReference type="InterPro" id="IPR020621">
    <property type="entry name" value="ATP-PRT_HisG_long"/>
</dbReference>
<dbReference type="InterPro" id="IPR013820">
    <property type="entry name" value="ATP_PRibTrfase_cat"/>
</dbReference>
<dbReference type="InterPro" id="IPR018198">
    <property type="entry name" value="ATP_PRibTrfase_CS"/>
</dbReference>
<dbReference type="InterPro" id="IPR001348">
    <property type="entry name" value="ATP_PRibTrfase_HisG"/>
</dbReference>
<dbReference type="InterPro" id="IPR013115">
    <property type="entry name" value="HisG_C"/>
</dbReference>
<dbReference type="InterPro" id="IPR011322">
    <property type="entry name" value="N-reg_PII-like_a/b"/>
</dbReference>
<dbReference type="InterPro" id="IPR015867">
    <property type="entry name" value="N-reg_PII/ATP_PRibTrfase_C"/>
</dbReference>
<dbReference type="NCBIfam" id="TIGR00070">
    <property type="entry name" value="hisG"/>
    <property type="match status" value="1"/>
</dbReference>
<dbReference type="NCBIfam" id="TIGR03455">
    <property type="entry name" value="HisG_C-term"/>
    <property type="match status" value="1"/>
</dbReference>
<dbReference type="PANTHER" id="PTHR21403:SF8">
    <property type="entry name" value="ATP PHOSPHORIBOSYLTRANSFERASE"/>
    <property type="match status" value="1"/>
</dbReference>
<dbReference type="PANTHER" id="PTHR21403">
    <property type="entry name" value="ATP PHOSPHORIBOSYLTRANSFERASE ATP-PRTASE"/>
    <property type="match status" value="1"/>
</dbReference>
<dbReference type="Pfam" id="PF01634">
    <property type="entry name" value="HisG"/>
    <property type="match status" value="1"/>
</dbReference>
<dbReference type="Pfam" id="PF08029">
    <property type="entry name" value="HisG_C"/>
    <property type="match status" value="1"/>
</dbReference>
<dbReference type="SUPFAM" id="SSF54913">
    <property type="entry name" value="GlnB-like"/>
    <property type="match status" value="1"/>
</dbReference>
<dbReference type="SUPFAM" id="SSF53850">
    <property type="entry name" value="Periplasmic binding protein-like II"/>
    <property type="match status" value="1"/>
</dbReference>
<dbReference type="PROSITE" id="PS01316">
    <property type="entry name" value="ATP_P_PHORIBOSYLTR"/>
    <property type="match status" value="1"/>
</dbReference>
<sequence length="299" mass="33367">MTDNTRLRIAMQKSGRLSDDSRELLARCGIKINLHTQRLIAMAENMPIDILRVRDDDIPGLVMDGVVDLGIIGENVLEEELLNRRAQGEDPRYFTLRRLDFGGCRLSLATPVDEAWDGPLSLNGKRIATSYPHLLKRYLDQKGISFKSCLLNGSVEVAPRAGLADAICDLVSTGATLEANGLREVEVIYRSKACLIQRDGEMEESKQQLIDKLLTRIQGVIQARESKYIMMHAPTERLDEVIALLPGAERPTILPLAGDQQRVAMHMVSSETLFWETMEKLKALGASSILVLPIEKMME</sequence>
<evidence type="ECO:0000255" key="1">
    <source>
        <dbReference type="HAMAP-Rule" id="MF_00079"/>
    </source>
</evidence>
<feature type="chain" id="PRO_1000092753" description="ATP phosphoribosyltransferase">
    <location>
        <begin position="1"/>
        <end position="299"/>
    </location>
</feature>